<organism>
    <name type="scientific">Calliactis polypus</name>
    <name type="common">Hermit crab anemone</name>
    <name type="synonym">Priapus polypus</name>
    <dbReference type="NCBI Taxonomy" id="656064"/>
    <lineage>
        <taxon>Eukaryota</taxon>
        <taxon>Metazoa</taxon>
        <taxon>Cnidaria</taxon>
        <taxon>Anthozoa</taxon>
        <taxon>Hexacorallia</taxon>
        <taxon>Actiniaria</taxon>
        <taxon>Nynantheae</taxon>
        <taxon>Hormathiidae</taxon>
        <taxon>Calliactis</taxon>
    </lineage>
</organism>
<feature type="signal peptide" evidence="3">
    <location>
        <begin position="1"/>
        <end position="22"/>
    </location>
</feature>
<feature type="propeptide" id="PRO_0000462164" evidence="10">
    <location>
        <begin position="23"/>
        <end position="35"/>
    </location>
</feature>
<feature type="chain" id="PRO_0000462165" description="Phospholipase A2" evidence="10">
    <location>
        <begin position="36"/>
        <end position="162"/>
    </location>
</feature>
<feature type="active site" evidence="1 4">
    <location>
        <position position="81"/>
    </location>
</feature>
<feature type="active site" evidence="1">
    <location>
        <position position="128"/>
    </location>
</feature>
<feature type="binding site" evidence="2">
    <location>
        <position position="61"/>
    </location>
    <ligand>
        <name>Ca(2+)</name>
        <dbReference type="ChEBI" id="CHEBI:29108"/>
    </ligand>
</feature>
<feature type="binding site" evidence="2">
    <location>
        <position position="63"/>
    </location>
    <ligand>
        <name>Ca(2+)</name>
        <dbReference type="ChEBI" id="CHEBI:29108"/>
    </ligand>
</feature>
<feature type="binding site" evidence="2">
    <location>
        <position position="65"/>
    </location>
    <ligand>
        <name>Ca(2+)</name>
        <dbReference type="ChEBI" id="CHEBI:29108"/>
    </ligand>
</feature>
<feature type="binding site" evidence="2">
    <location>
        <position position="82"/>
    </location>
    <ligand>
        <name>Ca(2+)</name>
        <dbReference type="ChEBI" id="CHEBI:29108"/>
    </ligand>
</feature>
<feature type="disulfide bond" evidence="1">
    <location>
        <begin position="60"/>
        <end position="155"/>
    </location>
</feature>
<feature type="disulfide bond" evidence="1">
    <location>
        <begin position="62"/>
        <end position="78"/>
    </location>
</feature>
<feature type="disulfide bond" evidence="1">
    <location>
        <begin position="77"/>
        <end position="134"/>
    </location>
</feature>
<feature type="disulfide bond" evidence="1">
    <location>
        <begin position="84"/>
        <end position="127"/>
    </location>
</feature>
<feature type="disulfide bond" evidence="9">
    <location>
        <begin position="94"/>
        <end position="120"/>
    </location>
</feature>
<feature type="disulfide bond" evidence="1">
    <location>
        <begin position="113"/>
        <end position="125"/>
    </location>
</feature>
<keyword id="KW-0106">Calcium</keyword>
<keyword id="KW-0165">Cleavage on pair of basic residues</keyword>
<keyword id="KW-1015">Disulfide bond</keyword>
<keyword id="KW-0378">Hydrolase</keyword>
<keyword id="KW-0442">Lipid degradation</keyword>
<keyword id="KW-0443">Lipid metabolism</keyword>
<keyword id="KW-0479">Metal-binding</keyword>
<keyword id="KW-0166">Nematocyst</keyword>
<keyword id="KW-0964">Secreted</keyword>
<keyword id="KW-0732">Signal</keyword>
<sequence>MKVLQMFFCVILLCVTSVLVEAKSTTKGDETASKRNFAQFAAMTYHTTHRWPKKYVGYGCYCGLGGYGIPVDPIDECCKTHDACYKKVEDSGICSYSWAIYLTIYKRKGGAECSEDNEKCQMEVCKCDSVAAKCLGKYKDIFNEKYAGYDKKGKCDPSFTLS</sequence>
<gene>
    <name evidence="7 8" type="ORF">c56806_g1_i1</name>
</gene>
<dbReference type="EC" id="3.1.1.4" evidence="4"/>
<dbReference type="Gene3D" id="1.20.90.10">
    <property type="entry name" value="Phospholipase A2 domain"/>
    <property type="match status" value="1"/>
</dbReference>
<dbReference type="InterPro" id="IPR001211">
    <property type="entry name" value="PLipase_A2"/>
</dbReference>
<dbReference type="InterPro" id="IPR016090">
    <property type="entry name" value="PLipase_A2_dom"/>
</dbReference>
<dbReference type="InterPro" id="IPR036444">
    <property type="entry name" value="PLipase_A2_dom_sf"/>
</dbReference>
<dbReference type="InterPro" id="IPR033113">
    <property type="entry name" value="PLipase_A2_His_AS"/>
</dbReference>
<dbReference type="PANTHER" id="PTHR11716">
    <property type="entry name" value="PHOSPHOLIPASE A2 FAMILY MEMBER"/>
    <property type="match status" value="1"/>
</dbReference>
<dbReference type="PANTHER" id="PTHR11716:SF47">
    <property type="entry name" value="PHOSPHOLIPASE A2-ALPHA"/>
    <property type="match status" value="1"/>
</dbReference>
<dbReference type="Pfam" id="PF00068">
    <property type="entry name" value="Phospholip_A2_1"/>
    <property type="match status" value="1"/>
</dbReference>
<dbReference type="PRINTS" id="PR00389">
    <property type="entry name" value="PHPHLIPASEA2"/>
</dbReference>
<dbReference type="SMART" id="SM00085">
    <property type="entry name" value="PA2c"/>
    <property type="match status" value="1"/>
</dbReference>
<dbReference type="SUPFAM" id="SSF48619">
    <property type="entry name" value="Phospholipase A2, PLA2"/>
    <property type="match status" value="1"/>
</dbReference>
<dbReference type="PROSITE" id="PS00118">
    <property type="entry name" value="PA2_HIS"/>
    <property type="match status" value="1"/>
</dbReference>
<reference key="1">
    <citation type="journal article" date="2023" name="Toxins">
        <title>Acontia, a specialised defensive structure, has low venom complexity in Calliactis polypus.</title>
        <authorList>
            <person name="Smith H.L."/>
            <person name="Prentis P.J."/>
            <person name="Bryan S.E."/>
            <person name="Norton R.S."/>
            <person name="Broszczak D.A."/>
        </authorList>
    </citation>
    <scope>NUCLEOTIDE SEQUENCE [MRNA]</scope>
    <scope>IDENTIFICATION BY MASS SPECTROMETRY</scope>
    <scope>SUBCELLULAR LOCATION</scope>
    <scope>TISSUE SPECIFICITY</scope>
</reference>
<reference key="2">
    <citation type="journal article" date="2024" name="Genome Biol. Evol.">
        <title>Molecular insights into the low complexity secreted venom of Calliactis polypus.</title>
        <authorList>
            <person name="Smith H.L."/>
            <person name="Broszczak D.A."/>
            <person name="Bryan S.E."/>
            <person name="Norton R.S."/>
            <person name="Prentis P.J."/>
        </authorList>
    </citation>
    <scope>NUCLEOTIDE SEQUENCE [MRNA]</scope>
    <scope>IDENTIFICATION BY MASS SPECTROMETRY</scope>
    <scope>TISSUE SPECIFICITY</scope>
    <scope>SUBCELLULAR LOCATION</scope>
</reference>
<protein>
    <recommendedName>
        <fullName evidence="7">Phospholipase A2</fullName>
        <shortName>PLA2</shortName>
        <ecNumber evidence="4">3.1.1.4</ecNumber>
    </recommendedName>
    <alternativeName>
        <fullName>Phosphatidylcholine 2-acylhydrolase</fullName>
    </alternativeName>
    <alternativeName>
        <fullName evidence="8">Phospholipase A2 Cpp1a</fullName>
        <shortName evidence="8">PLA2-Cpp1a</shortName>
    </alternativeName>
</protein>
<accession>P0DY42</accession>
<comment type="function">
    <text evidence="9">PLA2 catalyzes the calcium-dependent hydrolysis of the 2-acyl groups in 3-sn-phosphoglycerides.</text>
</comment>
<comment type="catalytic activity">
    <reaction evidence="4">
        <text>a 1,2-diacyl-sn-glycero-3-phosphocholine + H2O = a 1-acyl-sn-glycero-3-phosphocholine + a fatty acid + H(+)</text>
        <dbReference type="Rhea" id="RHEA:15801"/>
        <dbReference type="ChEBI" id="CHEBI:15377"/>
        <dbReference type="ChEBI" id="CHEBI:15378"/>
        <dbReference type="ChEBI" id="CHEBI:28868"/>
        <dbReference type="ChEBI" id="CHEBI:57643"/>
        <dbReference type="ChEBI" id="CHEBI:58168"/>
        <dbReference type="EC" id="3.1.1.4"/>
    </reaction>
</comment>
<comment type="cofactor">
    <cofactor evidence="2">
        <name>Ca(2+)</name>
        <dbReference type="ChEBI" id="CHEBI:29108"/>
    </cofactor>
    <text evidence="2">Binds 1 Ca(2+) ion.</text>
</comment>
<comment type="subcellular location">
    <subcellularLocation>
        <location evidence="5 6">Secreted</location>
    </subcellularLocation>
    <subcellularLocation>
        <location evidence="9">Nematocyst</location>
    </subcellularLocation>
</comment>
<comment type="tissue specificity">
    <text evidence="5 6">Expressed both outside and in acontia, a specialised envenomation structure laden with batteries of venom-containing nematocysts found only in the superfamily Metridioidea.</text>
</comment>
<comment type="similarity">
    <text evidence="9">Belongs to the phospholipase A2 family. Group I subfamily. D49 sub-subfamily.</text>
</comment>
<name>PLA2_CALPY</name>
<evidence type="ECO:0000250" key="1">
    <source>
        <dbReference type="UniProtKB" id="P00608"/>
    </source>
</evidence>
<evidence type="ECO:0000250" key="2">
    <source>
        <dbReference type="UniProtKB" id="P60043"/>
    </source>
</evidence>
<evidence type="ECO:0000255" key="3"/>
<evidence type="ECO:0000255" key="4">
    <source>
        <dbReference type="PROSITE-ProRule" id="PRU10035"/>
    </source>
</evidence>
<evidence type="ECO:0000269" key="5">
    <source>
    </source>
</evidence>
<evidence type="ECO:0000269" key="6">
    <source>
    </source>
</evidence>
<evidence type="ECO:0000303" key="7">
    <source>
    </source>
</evidence>
<evidence type="ECO:0000303" key="8">
    <source>
    </source>
</evidence>
<evidence type="ECO:0000305" key="9"/>
<evidence type="ECO:0000305" key="10">
    <source>
    </source>
</evidence>
<proteinExistence type="evidence at protein level"/>